<organism>
    <name type="scientific">Rickettsia prowazekii (strain Madrid E)</name>
    <dbReference type="NCBI Taxonomy" id="272947"/>
    <lineage>
        <taxon>Bacteria</taxon>
        <taxon>Pseudomonadati</taxon>
        <taxon>Pseudomonadota</taxon>
        <taxon>Alphaproteobacteria</taxon>
        <taxon>Rickettsiales</taxon>
        <taxon>Rickettsiaceae</taxon>
        <taxon>Rickettsieae</taxon>
        <taxon>Rickettsia</taxon>
        <taxon>typhus group</taxon>
    </lineage>
</organism>
<evidence type="ECO:0000255" key="1">
    <source>
        <dbReference type="HAMAP-Rule" id="MF_00969"/>
    </source>
</evidence>
<name>MFD_RICPR</name>
<accession>O05955</accession>
<sequence length="1120" mass="127676">MIQQKFPATAKCFYVIDNFTKNLNQDFILSVSNEEEALQLYKQALFFSSNDNIYYFPSYDTIPYDHTSPNANIVSRRAETLTKLITNSKGKLLITHAANLLNKLPPKDFFSKYFLKLYPKIKFTMDELSMLLVENSFTRNTSSIDVGEFAVRGEIIDIILPGPKGYRINFSWDYIESIKEFDINTQISTKYCAELVISPANEIVLNSETIGNFKNNYLRNFGVNHTDNPLYEAVISGRKFAGYEQLLPLFYYSCSSLVDYLNNPICIFDNLSKQAILEFENSYNDFYLARSKANKLKVNNFYPTLSPTSLYFTASAITELLEQKNNILISYENSEQASLIGNISSISFIEKKTIFDKLFEIIKANFHKKIIICSSVLSSFERIKSIIQNYEYTFNEINKLDEAKASVINIGIIPLNQSFYTKEYLFITSSELLEEKTLYTNTNKKLKNILLELDNLKEGEFVVHKDHGIGQFLKLEAFKIQGKLHDFLKILYFGNDKLYVPVENIEVIKKYGSDNAELNKLGSVAWNKSKAKLKNRIKEISLHLIQIAAKRKLNISTPIELDLEAYDKFCANFPFSETEDQLTAINDIREDLTNGMLMDRLICGDVGFGKTEVAMRAVFMVAKSLNEYLPQVAVVVPTTILCSQHFSRFIERFKGFGLNIKQLSSVISSKEANIIRLELASGKINIIIGTHALLHKNTKFFNLKLLIIDEEQHFGVSQKEFLKSLKSSTHVLAMSATPIPRTLQMSMTGLKELSIIATPPLNRLEVRTSVMPFDPVIIRDALLREHFRGGRSFYVAPRIKDMEDIEKQLKQIVPELSYKIAHGKMTPSKIDEVMSEFYVGKFDILISTTIIESGIDIAEANTMIIHKADTLGLSQLYQLRGRIGRGKIRGYAYLTVASNKKITSHSLRRLEIIQNSCSLGSGFTIASHDADLRGFGNLIGEEQSGQIKEVGTELYQEMLEEQIALLKDDPIVLEQAFIPNINLGLSVFIPDSYVSDSALKIGLYRRIGNLSNEMEVEKFKDEMIDRFGLLPIEFNNLLDIVKIKLLCFKLNIENLDSGDDGFVIRFYKNADMTDKILKFVSRYSNQTKIKPNNKLVFIKKLVDKNIITEVNQLLWTLLEI</sequence>
<comment type="function">
    <text evidence="1">Couples transcription and DNA repair by recognizing RNA polymerase (RNAP) stalled at DNA lesions. Mediates ATP-dependent release of RNAP and its truncated transcript from the DNA, and recruitment of nucleotide excision repair machinery to the damaged site.</text>
</comment>
<comment type="subcellular location">
    <subcellularLocation>
        <location evidence="1">Cytoplasm</location>
    </subcellularLocation>
</comment>
<comment type="similarity">
    <text evidence="1">In the N-terminal section; belongs to the UvrB family.</text>
</comment>
<comment type="similarity">
    <text evidence="1">In the C-terminal section; belongs to the helicase family. RecG subfamily.</text>
</comment>
<reference key="1">
    <citation type="journal article" date="1998" name="Nature">
        <title>The genome sequence of Rickettsia prowazekii and the origin of mitochondria.</title>
        <authorList>
            <person name="Andersson S.G.E."/>
            <person name="Zomorodipour A."/>
            <person name="Andersson J.O."/>
            <person name="Sicheritz-Ponten T."/>
            <person name="Alsmark U.C.M."/>
            <person name="Podowski R.M."/>
            <person name="Naeslund A.K."/>
            <person name="Eriksson A.-S."/>
            <person name="Winkler H.H."/>
            <person name="Kurland C.G."/>
        </authorList>
    </citation>
    <scope>NUCLEOTIDE SEQUENCE [LARGE SCALE GENOMIC DNA]</scope>
    <source>
        <strain>Madrid E</strain>
    </source>
</reference>
<reference key="2">
    <citation type="journal article" date="1997" name="Microbiology">
        <title>Genomic rearrangements during evolution of the obligate intracellular parasite Rickettsia prowazekii as inferred from an analysis of 52015 bp nucleotide sequence.</title>
        <authorList>
            <person name="Andersson J.O."/>
            <person name="Andersson S.G.E."/>
        </authorList>
    </citation>
    <scope>NUCLEOTIDE SEQUENCE [GENOMIC DNA] OF 132-1120</scope>
    <source>
        <strain>Madrid E</strain>
    </source>
</reference>
<dbReference type="EC" id="3.6.4.-" evidence="1"/>
<dbReference type="EMBL" id="AJ235272">
    <property type="protein sequence ID" value="CAA15042.1"/>
    <property type="molecule type" value="Genomic_DNA"/>
</dbReference>
<dbReference type="EMBL" id="Y11783">
    <property type="protein sequence ID" value="CAA72474.1"/>
    <property type="molecule type" value="Genomic_DNA"/>
</dbReference>
<dbReference type="PIR" id="H71664">
    <property type="entry name" value="H71664"/>
</dbReference>
<dbReference type="RefSeq" id="NP_220966.1">
    <property type="nucleotide sequence ID" value="NC_000963.1"/>
</dbReference>
<dbReference type="RefSeq" id="WP_004598992.1">
    <property type="nucleotide sequence ID" value="NC_000963.1"/>
</dbReference>
<dbReference type="SMR" id="O05955"/>
<dbReference type="STRING" id="272947.gene:17555677"/>
<dbReference type="EnsemblBacteria" id="CAA15042">
    <property type="protein sequence ID" value="CAA15042"/>
    <property type="gene ID" value="CAA15042"/>
</dbReference>
<dbReference type="GeneID" id="57569723"/>
<dbReference type="KEGG" id="rpr:RP598"/>
<dbReference type="PATRIC" id="fig|272947.5.peg.616"/>
<dbReference type="eggNOG" id="COG1197">
    <property type="taxonomic scope" value="Bacteria"/>
</dbReference>
<dbReference type="HOGENOM" id="CLU_005122_3_2_5"/>
<dbReference type="OrthoDB" id="9804325at2"/>
<dbReference type="Proteomes" id="UP000002480">
    <property type="component" value="Chromosome"/>
</dbReference>
<dbReference type="GO" id="GO:0005737">
    <property type="term" value="C:cytoplasm"/>
    <property type="evidence" value="ECO:0007669"/>
    <property type="project" value="UniProtKB-SubCell"/>
</dbReference>
<dbReference type="GO" id="GO:0005524">
    <property type="term" value="F:ATP binding"/>
    <property type="evidence" value="ECO:0007669"/>
    <property type="project" value="UniProtKB-UniRule"/>
</dbReference>
<dbReference type="GO" id="GO:0003684">
    <property type="term" value="F:damaged DNA binding"/>
    <property type="evidence" value="ECO:0007669"/>
    <property type="project" value="InterPro"/>
</dbReference>
<dbReference type="GO" id="GO:0003678">
    <property type="term" value="F:DNA helicase activity"/>
    <property type="evidence" value="ECO:0007669"/>
    <property type="project" value="TreeGrafter"/>
</dbReference>
<dbReference type="GO" id="GO:0016787">
    <property type="term" value="F:hydrolase activity"/>
    <property type="evidence" value="ECO:0007669"/>
    <property type="project" value="UniProtKB-KW"/>
</dbReference>
<dbReference type="GO" id="GO:0006355">
    <property type="term" value="P:regulation of DNA-templated transcription"/>
    <property type="evidence" value="ECO:0007669"/>
    <property type="project" value="UniProtKB-UniRule"/>
</dbReference>
<dbReference type="GO" id="GO:0000716">
    <property type="term" value="P:transcription-coupled nucleotide-excision repair, DNA damage recognition"/>
    <property type="evidence" value="ECO:0007669"/>
    <property type="project" value="UniProtKB-UniRule"/>
</dbReference>
<dbReference type="CDD" id="cd17991">
    <property type="entry name" value="DEXHc_TRCF"/>
    <property type="match status" value="1"/>
</dbReference>
<dbReference type="CDD" id="cd18810">
    <property type="entry name" value="SF2_C_TRCF"/>
    <property type="match status" value="1"/>
</dbReference>
<dbReference type="Gene3D" id="2.40.10.170">
    <property type="match status" value="1"/>
</dbReference>
<dbReference type="Gene3D" id="3.40.50.11180">
    <property type="match status" value="1"/>
</dbReference>
<dbReference type="Gene3D" id="3.40.50.300">
    <property type="entry name" value="P-loop containing nucleotide triphosphate hydrolases"/>
    <property type="match status" value="2"/>
</dbReference>
<dbReference type="Gene3D" id="3.30.2060.10">
    <property type="entry name" value="Penicillin-binding protein 1b domain"/>
    <property type="match status" value="1"/>
</dbReference>
<dbReference type="Gene3D" id="3.90.1150.50">
    <property type="entry name" value="Transcription-repair-coupling factor, D7 domain"/>
    <property type="match status" value="1"/>
</dbReference>
<dbReference type="HAMAP" id="MF_00969">
    <property type="entry name" value="TRCF"/>
    <property type="match status" value="1"/>
</dbReference>
<dbReference type="InterPro" id="IPR003711">
    <property type="entry name" value="CarD-like/TRCF_RID"/>
</dbReference>
<dbReference type="InterPro" id="IPR036101">
    <property type="entry name" value="CarD-like/TRCF_RID_sf"/>
</dbReference>
<dbReference type="InterPro" id="IPR011545">
    <property type="entry name" value="DEAD/DEAH_box_helicase_dom"/>
</dbReference>
<dbReference type="InterPro" id="IPR014001">
    <property type="entry name" value="Helicase_ATP-bd"/>
</dbReference>
<dbReference type="InterPro" id="IPR001650">
    <property type="entry name" value="Helicase_C-like"/>
</dbReference>
<dbReference type="InterPro" id="IPR004576">
    <property type="entry name" value="Mfd"/>
</dbReference>
<dbReference type="InterPro" id="IPR027417">
    <property type="entry name" value="P-loop_NTPase"/>
</dbReference>
<dbReference type="InterPro" id="IPR047112">
    <property type="entry name" value="RecG/Mfd"/>
</dbReference>
<dbReference type="InterPro" id="IPR037235">
    <property type="entry name" value="TRCF-like_C_D7"/>
</dbReference>
<dbReference type="InterPro" id="IPR005118">
    <property type="entry name" value="TRCF_C"/>
</dbReference>
<dbReference type="InterPro" id="IPR041471">
    <property type="entry name" value="UvrB_inter"/>
</dbReference>
<dbReference type="NCBIfam" id="TIGR00580">
    <property type="entry name" value="mfd"/>
    <property type="match status" value="1"/>
</dbReference>
<dbReference type="PANTHER" id="PTHR47964">
    <property type="entry name" value="ATP-DEPENDENT DNA HELICASE HOMOLOG RECG, CHLOROPLASTIC"/>
    <property type="match status" value="1"/>
</dbReference>
<dbReference type="PANTHER" id="PTHR47964:SF1">
    <property type="entry name" value="ATP-DEPENDENT DNA HELICASE HOMOLOG RECG, CHLOROPLASTIC"/>
    <property type="match status" value="1"/>
</dbReference>
<dbReference type="Pfam" id="PF02559">
    <property type="entry name" value="CarD_TRCF_RID"/>
    <property type="match status" value="1"/>
</dbReference>
<dbReference type="Pfam" id="PF00270">
    <property type="entry name" value="DEAD"/>
    <property type="match status" value="1"/>
</dbReference>
<dbReference type="Pfam" id="PF00271">
    <property type="entry name" value="Helicase_C"/>
    <property type="match status" value="1"/>
</dbReference>
<dbReference type="Pfam" id="PF03461">
    <property type="entry name" value="TRCF"/>
    <property type="match status" value="1"/>
</dbReference>
<dbReference type="Pfam" id="PF17757">
    <property type="entry name" value="UvrB_inter"/>
    <property type="match status" value="1"/>
</dbReference>
<dbReference type="SMART" id="SM01058">
    <property type="entry name" value="CarD_TRCF"/>
    <property type="match status" value="1"/>
</dbReference>
<dbReference type="SMART" id="SM00487">
    <property type="entry name" value="DEXDc"/>
    <property type="match status" value="1"/>
</dbReference>
<dbReference type="SMART" id="SM00490">
    <property type="entry name" value="HELICc"/>
    <property type="match status" value="1"/>
</dbReference>
<dbReference type="SMART" id="SM00982">
    <property type="entry name" value="TRCF"/>
    <property type="match status" value="1"/>
</dbReference>
<dbReference type="SUPFAM" id="SSF141259">
    <property type="entry name" value="CarD-like"/>
    <property type="match status" value="1"/>
</dbReference>
<dbReference type="SUPFAM" id="SSF52540">
    <property type="entry name" value="P-loop containing nucleoside triphosphate hydrolases"/>
    <property type="match status" value="4"/>
</dbReference>
<dbReference type="SUPFAM" id="SSF143517">
    <property type="entry name" value="TRCF domain-like"/>
    <property type="match status" value="1"/>
</dbReference>
<dbReference type="PROSITE" id="PS51192">
    <property type="entry name" value="HELICASE_ATP_BIND_1"/>
    <property type="match status" value="1"/>
</dbReference>
<dbReference type="PROSITE" id="PS51194">
    <property type="entry name" value="HELICASE_CTER"/>
    <property type="match status" value="1"/>
</dbReference>
<keyword id="KW-0067">ATP-binding</keyword>
<keyword id="KW-0963">Cytoplasm</keyword>
<keyword id="KW-0227">DNA damage</keyword>
<keyword id="KW-0234">DNA repair</keyword>
<keyword id="KW-0238">DNA-binding</keyword>
<keyword id="KW-0347">Helicase</keyword>
<keyword id="KW-0378">Hydrolase</keyword>
<keyword id="KW-0547">Nucleotide-binding</keyword>
<keyword id="KW-1185">Reference proteome</keyword>
<gene>
    <name evidence="1" type="primary">mfd</name>
    <name type="ordered locus">RP598</name>
</gene>
<feature type="chain" id="PRO_0000102173" description="Transcription-repair-coupling factor">
    <location>
        <begin position="1"/>
        <end position="1120"/>
    </location>
</feature>
<feature type="domain" description="Helicase ATP-binding" evidence="1">
    <location>
        <begin position="591"/>
        <end position="756"/>
    </location>
</feature>
<feature type="domain" description="Helicase C-terminal" evidence="1">
    <location>
        <begin position="777"/>
        <end position="933"/>
    </location>
</feature>
<feature type="short sequence motif" description="DEEQ box">
    <location>
        <begin position="709"/>
        <end position="712"/>
    </location>
</feature>
<feature type="binding site" evidence="1">
    <location>
        <begin position="604"/>
        <end position="611"/>
    </location>
    <ligand>
        <name>ATP</name>
        <dbReference type="ChEBI" id="CHEBI:30616"/>
    </ligand>
</feature>
<protein>
    <recommendedName>
        <fullName evidence="1">Transcription-repair-coupling factor</fullName>
        <shortName evidence="1">TRCF</shortName>
        <ecNumber evidence="1">3.6.4.-</ecNumber>
    </recommendedName>
</protein>
<proteinExistence type="inferred from homology"/>